<name>NDUA5_CANAL</name>
<keyword id="KW-0249">Electron transport</keyword>
<keyword id="KW-0472">Membrane</keyword>
<keyword id="KW-0496">Mitochondrion</keyword>
<keyword id="KW-0999">Mitochondrion inner membrane</keyword>
<keyword id="KW-1185">Reference proteome</keyword>
<keyword id="KW-0679">Respiratory chain</keyword>
<keyword id="KW-0813">Transport</keyword>
<keyword id="KW-0843">Virulence</keyword>
<evidence type="ECO:0000250" key="1">
    <source>
        <dbReference type="UniProtKB" id="Q16718"/>
    </source>
</evidence>
<evidence type="ECO:0000269" key="2">
    <source>
    </source>
</evidence>
<evidence type="ECO:0000269" key="3">
    <source>
    </source>
</evidence>
<evidence type="ECO:0000269" key="4">
    <source>
    </source>
</evidence>
<evidence type="ECO:0000303" key="5">
    <source>
    </source>
</evidence>
<evidence type="ECO:0000305" key="6"/>
<feature type="chain" id="PRO_0000459485" description="NADH dehydrogenase [ubiquinone] 1 alpha subcomplex subunit MCI4">
    <location>
        <begin position="1"/>
        <end position="139"/>
    </location>
</feature>
<sequence length="139" mass="15589">MRFTPILRQIPKLKLSEVLVKAGDGVPTGLAGIYKHPNPRPALVTLYNETLKTLKENFPADSVYRQSTEALTQNRLMIVESEEIVENIENQIGGGLIEEIVIQAADELSLASQLGGLKVWEELEEKPLDDQWVYFGKKI</sequence>
<protein>
    <recommendedName>
        <fullName evidence="1">NADH dehydrogenase [ubiquinone] 1 alpha subcomplex subunit MCI4</fullName>
    </recommendedName>
</protein>
<gene>
    <name evidence="5" type="primary">MCI4</name>
    <name type="ordered locus">CAALFM_CR01740WA</name>
    <name type="ordered locus">orf19.10102</name>
</gene>
<accession>Q5A995</accession>
<dbReference type="EMBL" id="CP017630">
    <property type="protein sequence ID" value="AOW30933.1"/>
    <property type="molecule type" value="Genomic_DNA"/>
</dbReference>
<dbReference type="RefSeq" id="XP_718236.1">
    <property type="nucleotide sequence ID" value="XM_713143.1"/>
</dbReference>
<dbReference type="SMR" id="Q5A995"/>
<dbReference type="STRING" id="237561.Q5A995"/>
<dbReference type="EnsemblFungi" id="CR_01740W_A-T">
    <property type="protein sequence ID" value="CR_01740W_A-T-p1"/>
    <property type="gene ID" value="CR_01740W_A"/>
</dbReference>
<dbReference type="GeneID" id="3640118"/>
<dbReference type="KEGG" id="cal:CAALFM_CR01740WA"/>
<dbReference type="CGD" id="CAL0000198704">
    <property type="gene designation" value="MCI4"/>
</dbReference>
<dbReference type="VEuPathDB" id="FungiDB:CR_01740W_A"/>
<dbReference type="eggNOG" id="KOG3365">
    <property type="taxonomic scope" value="Eukaryota"/>
</dbReference>
<dbReference type="HOGENOM" id="CLU_099943_0_1_1"/>
<dbReference type="InParanoid" id="Q5A995"/>
<dbReference type="OrthoDB" id="286811at2759"/>
<dbReference type="Proteomes" id="UP000000559">
    <property type="component" value="Chromosome R"/>
</dbReference>
<dbReference type="GO" id="GO:0005743">
    <property type="term" value="C:mitochondrial inner membrane"/>
    <property type="evidence" value="ECO:0007669"/>
    <property type="project" value="UniProtKB-SubCell"/>
</dbReference>
<dbReference type="GO" id="GO:0045271">
    <property type="term" value="C:respiratory chain complex I"/>
    <property type="evidence" value="ECO:0000318"/>
    <property type="project" value="GO_Central"/>
</dbReference>
<dbReference type="GO" id="GO:0022904">
    <property type="term" value="P:respiratory electron transport chain"/>
    <property type="evidence" value="ECO:0007669"/>
    <property type="project" value="InterPro"/>
</dbReference>
<dbReference type="InterPro" id="IPR006806">
    <property type="entry name" value="NDUFA5"/>
</dbReference>
<dbReference type="PANTHER" id="PTHR12653:SF0">
    <property type="entry name" value="NADH DEHYDROGENASE [UBIQUINONE] 1 ALPHA SUBCOMPLEX SUBUNIT 5"/>
    <property type="match status" value="1"/>
</dbReference>
<dbReference type="PANTHER" id="PTHR12653">
    <property type="entry name" value="NADH-UBIQUINONE OXIDOREDUCTASE 13 KD-B SUBUNIT"/>
    <property type="match status" value="1"/>
</dbReference>
<dbReference type="Pfam" id="PF04716">
    <property type="entry name" value="ETC_C1_NDUFA5"/>
    <property type="match status" value="1"/>
</dbReference>
<reference key="1">
    <citation type="journal article" date="2004" name="Proc. Natl. Acad. Sci. U.S.A.">
        <title>The diploid genome sequence of Candida albicans.</title>
        <authorList>
            <person name="Jones T."/>
            <person name="Federspiel N.A."/>
            <person name="Chibana H."/>
            <person name="Dungan J."/>
            <person name="Kalman S."/>
            <person name="Magee B.B."/>
            <person name="Newport G."/>
            <person name="Thorstenson Y.R."/>
            <person name="Agabian N."/>
            <person name="Magee P.T."/>
            <person name="Davis R.W."/>
            <person name="Scherer S."/>
        </authorList>
    </citation>
    <scope>NUCLEOTIDE SEQUENCE [LARGE SCALE GENOMIC DNA]</scope>
    <source>
        <strain>SC5314 / ATCC MYA-2876</strain>
    </source>
</reference>
<reference key="2">
    <citation type="journal article" date="2007" name="Genome Biol.">
        <title>Assembly of the Candida albicans genome into sixteen supercontigs aligned on the eight chromosomes.</title>
        <authorList>
            <person name="van het Hoog M."/>
            <person name="Rast T.J."/>
            <person name="Martchenko M."/>
            <person name="Grindle S."/>
            <person name="Dignard D."/>
            <person name="Hogues H."/>
            <person name="Cuomo C."/>
            <person name="Berriman M."/>
            <person name="Scherer S."/>
            <person name="Magee B.B."/>
            <person name="Whiteway M."/>
            <person name="Chibana H."/>
            <person name="Nantel A."/>
            <person name="Magee P.T."/>
        </authorList>
    </citation>
    <scope>GENOME REANNOTATION</scope>
    <source>
        <strain>SC5314 / ATCC MYA-2876</strain>
    </source>
</reference>
<reference key="3">
    <citation type="journal article" date="2013" name="Genome Biol.">
        <title>Assembly of a phased diploid Candida albicans genome facilitates allele-specific measurements and provides a simple model for repeat and indel structure.</title>
        <authorList>
            <person name="Muzzey D."/>
            <person name="Schwartz K."/>
            <person name="Weissman J.S."/>
            <person name="Sherlock G."/>
        </authorList>
    </citation>
    <scope>NUCLEOTIDE SEQUENCE [LARGE SCALE GENOMIC DNA]</scope>
    <scope>GENOME REANNOTATION</scope>
    <source>
        <strain>SC5314 / ATCC MYA-2876</strain>
    </source>
</reference>
<reference key="4">
    <citation type="journal article" date="2009" name="Proteomics">
        <title>A proteomic analysis of the salt, cadmium and peroxide stress responses in Candida albicans and the role of the Hog1 stress-activated MAPK in regulating the stress-induced proteome.</title>
        <authorList>
            <person name="Yin Z."/>
            <person name="Stead D."/>
            <person name="Walker J."/>
            <person name="Selway L."/>
            <person name="Smith D.A."/>
            <person name="Brown A.J."/>
            <person name="Quinn J."/>
        </authorList>
    </citation>
    <scope>INDUCTION</scope>
</reference>
<reference key="5">
    <citation type="journal article" date="2011" name="J. Biol. Chem.">
        <title>Cap2-HAP complex is a critical transcriptional regulator that has dual but contrasting roles in regulation of iron homeostasis in Candida albicans.</title>
        <authorList>
            <person name="Singh R.P."/>
            <person name="Prasad H.K."/>
            <person name="Sinha I."/>
            <person name="Agarwal N."/>
            <person name="Natarajan K."/>
        </authorList>
    </citation>
    <scope>INDUCTION</scope>
</reference>
<reference key="6">
    <citation type="journal article" date="2015" name="J. Proteomics">
        <title>Candida albicans cell shaving uncovers new proteins involved in cell wall integrity, yeast to hypha transition, stress response and host-pathogen interaction.</title>
        <authorList>
            <person name="Gil-Bona A."/>
            <person name="Parra-Giraldo C.M."/>
            <person name="Hernaez M.L."/>
            <person name="Reales-Calderon J.A."/>
            <person name="Solis N.V."/>
            <person name="Filler S.G."/>
            <person name="Monteoliva L."/>
            <person name="Gil C."/>
        </authorList>
    </citation>
    <scope>FUNCTION</scope>
    <scope>DISRUPTION PHENOTYPE</scope>
</reference>
<organism>
    <name type="scientific">Candida albicans (strain SC5314 / ATCC MYA-2876)</name>
    <name type="common">Yeast</name>
    <dbReference type="NCBI Taxonomy" id="237561"/>
    <lineage>
        <taxon>Eukaryota</taxon>
        <taxon>Fungi</taxon>
        <taxon>Dikarya</taxon>
        <taxon>Ascomycota</taxon>
        <taxon>Saccharomycotina</taxon>
        <taxon>Pichiomycetes</taxon>
        <taxon>Debaryomycetaceae</taxon>
        <taxon>Candida/Lodderomyces clade</taxon>
        <taxon>Candida</taxon>
    </lineage>
</organism>
<comment type="function">
    <text evidence="1 4">Accessory subunit of the mitochondrial membrane respiratory chain NADH dehydrogenase (Complex I), that is believed not to be involved in catalysis. Complex I functions in the transfer of electrons from NADH to the respiratory chain. The immediate electron acceptor for the enzyme is believed to be ubiquinone (By similarity). Involved in osmotic and oxidative resistance, yeast to hypha transition and the ability to damage and invade oral epithelial cells (PubMed:26087349).</text>
</comment>
<comment type="subcellular location">
    <subcellularLocation>
        <location evidence="1">Mitochondrion inner membrane</location>
        <topology evidence="1">Peripheral membrane protein</topology>
        <orientation evidence="1">Matrix side</orientation>
    </subcellularLocation>
</comment>
<comment type="induction">
    <text evidence="2 3">Expression is repressed by CAP2/HAP43 (PubMed:21592964). Expression is up-regulated by H(2)O(2) in a HOG1-dependent fashion (PubMed:19824012).</text>
</comment>
<comment type="disruption phenotype">
    <text evidence="4">Increases the sensitivity to the oxidative stress agent H(2)O(2), as well as to osmotic stress agents sorbitol and KCl (PubMed:26087349). Impairs the yeast to hypha transition (PubMed:26087349). Causes significantly more damage to the host macrophages and causes significantly less damage to host oral epithelial cells (PubMed:26087349).</text>
</comment>
<comment type="similarity">
    <text evidence="6">Belongs to the complex I NDUFA5 subunit family.</text>
</comment>
<proteinExistence type="evidence at transcript level"/>